<name>XANQ_ECOL6</name>
<protein>
    <recommendedName>
        <fullName evidence="1">Xanthine permease XanQ</fullName>
    </recommendedName>
</protein>
<keyword id="KW-0997">Cell inner membrane</keyword>
<keyword id="KW-1003">Cell membrane</keyword>
<keyword id="KW-0472">Membrane</keyword>
<keyword id="KW-1185">Reference proteome</keyword>
<keyword id="KW-0812">Transmembrane</keyword>
<keyword id="KW-1133">Transmembrane helix</keyword>
<keyword id="KW-0813">Transport</keyword>
<gene>
    <name type="primary">xanQ</name>
    <name type="ordered locus">c3460</name>
</gene>
<evidence type="ECO:0000250" key="1">
    <source>
        <dbReference type="UniProtKB" id="P67444"/>
    </source>
</evidence>
<evidence type="ECO:0000255" key="2"/>
<evidence type="ECO:0000305" key="3"/>
<proteinExistence type="inferred from homology"/>
<reference key="1">
    <citation type="journal article" date="2002" name="Proc. Natl. Acad. Sci. U.S.A.">
        <title>Extensive mosaic structure revealed by the complete genome sequence of uropathogenic Escherichia coli.</title>
        <authorList>
            <person name="Welch R.A."/>
            <person name="Burland V."/>
            <person name="Plunkett G. III"/>
            <person name="Redford P."/>
            <person name="Roesch P."/>
            <person name="Rasko D."/>
            <person name="Buckles E.L."/>
            <person name="Liou S.-R."/>
            <person name="Boutin A."/>
            <person name="Hackett J."/>
            <person name="Stroud D."/>
            <person name="Mayhew G.F."/>
            <person name="Rose D.J."/>
            <person name="Zhou S."/>
            <person name="Schwartz D.C."/>
            <person name="Perna N.T."/>
            <person name="Mobley H.L.T."/>
            <person name="Donnenberg M.S."/>
            <person name="Blattner F.R."/>
        </authorList>
    </citation>
    <scope>NUCLEOTIDE SEQUENCE [LARGE SCALE GENOMIC DNA]</scope>
    <source>
        <strain>CFT073 / ATCC 700928 / UPEC</strain>
    </source>
</reference>
<dbReference type="EMBL" id="AE014075">
    <property type="protein sequence ID" value="AAN81905.1"/>
    <property type="status" value="ALT_INIT"/>
    <property type="molecule type" value="Genomic_DNA"/>
</dbReference>
<dbReference type="RefSeq" id="WP_001280192.1">
    <property type="nucleotide sequence ID" value="NZ_CP051263.1"/>
</dbReference>
<dbReference type="SMR" id="P67445"/>
<dbReference type="STRING" id="199310.c3460"/>
<dbReference type="GeneID" id="75205281"/>
<dbReference type="KEGG" id="ecc:c3460"/>
<dbReference type="eggNOG" id="COG2233">
    <property type="taxonomic scope" value="Bacteria"/>
</dbReference>
<dbReference type="HOGENOM" id="CLU_017959_8_0_6"/>
<dbReference type="Proteomes" id="UP000001410">
    <property type="component" value="Chromosome"/>
</dbReference>
<dbReference type="GO" id="GO:0005886">
    <property type="term" value="C:plasma membrane"/>
    <property type="evidence" value="ECO:0007669"/>
    <property type="project" value="UniProtKB-SubCell"/>
</dbReference>
<dbReference type="GO" id="GO:0042907">
    <property type="term" value="F:xanthine transmembrane transporter activity"/>
    <property type="evidence" value="ECO:0007669"/>
    <property type="project" value="TreeGrafter"/>
</dbReference>
<dbReference type="InterPro" id="IPR006043">
    <property type="entry name" value="NCS2"/>
</dbReference>
<dbReference type="InterPro" id="IPR006042">
    <property type="entry name" value="Xan_ur_permease"/>
</dbReference>
<dbReference type="NCBIfam" id="TIGR00801">
    <property type="entry name" value="ncs2"/>
    <property type="match status" value="1"/>
</dbReference>
<dbReference type="PANTHER" id="PTHR42810">
    <property type="entry name" value="PURINE PERMEASE C1399.01C-RELATED"/>
    <property type="match status" value="1"/>
</dbReference>
<dbReference type="PANTHER" id="PTHR42810:SF5">
    <property type="entry name" value="XANTHINE PERMEASE XANQ"/>
    <property type="match status" value="1"/>
</dbReference>
<dbReference type="Pfam" id="PF00860">
    <property type="entry name" value="Xan_ur_permease"/>
    <property type="match status" value="1"/>
</dbReference>
<dbReference type="PROSITE" id="PS01116">
    <property type="entry name" value="XANTH_URACIL_PERMASE"/>
    <property type="match status" value="1"/>
</dbReference>
<feature type="chain" id="PRO_0000165966" description="Xanthine permease XanQ">
    <location>
        <begin position="1"/>
        <end position="466"/>
    </location>
</feature>
<feature type="topological domain" description="Cytoplasmic" evidence="2">
    <location>
        <begin position="1"/>
        <end position="25"/>
    </location>
</feature>
<feature type="transmembrane region" description="Helical" evidence="2">
    <location>
        <begin position="26"/>
        <end position="46"/>
    </location>
</feature>
<feature type="topological domain" description="Periplasmic" evidence="2">
    <location>
        <begin position="47"/>
        <end position="55"/>
    </location>
</feature>
<feature type="transmembrane region" description="Helical" evidence="2">
    <location>
        <begin position="56"/>
        <end position="76"/>
    </location>
</feature>
<feature type="topological domain" description="Cytoplasmic" evidence="2">
    <location>
        <begin position="77"/>
        <end position="80"/>
    </location>
</feature>
<feature type="transmembrane region" description="Helical" evidence="2">
    <location>
        <begin position="81"/>
        <end position="101"/>
    </location>
</feature>
<feature type="topological domain" description="Periplasmic" evidence="2">
    <location>
        <begin position="102"/>
        <end position="120"/>
    </location>
</feature>
<feature type="transmembrane region" description="Helical" evidence="2">
    <location>
        <begin position="121"/>
        <end position="141"/>
    </location>
</feature>
<feature type="topological domain" description="Cytoplasmic" evidence="2">
    <location>
        <begin position="142"/>
        <end position="151"/>
    </location>
</feature>
<feature type="transmembrane region" description="Helical" evidence="2">
    <location>
        <begin position="152"/>
        <end position="172"/>
    </location>
</feature>
<feature type="topological domain" description="Periplasmic" evidence="2">
    <location>
        <begin position="173"/>
        <end position="180"/>
    </location>
</feature>
<feature type="transmembrane region" description="Helical" evidence="2">
    <location>
        <begin position="181"/>
        <end position="201"/>
    </location>
</feature>
<feature type="topological domain" description="Cytoplasmic" evidence="2">
    <location>
        <begin position="202"/>
        <end position="210"/>
    </location>
</feature>
<feature type="transmembrane region" description="Helical" evidence="2">
    <location>
        <begin position="211"/>
        <end position="231"/>
    </location>
</feature>
<feature type="topological domain" description="Periplasmic" evidence="2">
    <location>
        <begin position="232"/>
        <end position="258"/>
    </location>
</feature>
<feature type="transmembrane region" description="Helical" evidence="2">
    <location>
        <begin position="259"/>
        <end position="279"/>
    </location>
</feature>
<feature type="topological domain" description="Cytoplasmic" evidence="2">
    <location>
        <begin position="280"/>
        <end position="298"/>
    </location>
</feature>
<feature type="transmembrane region" description="Helical" evidence="2">
    <location>
        <begin position="299"/>
        <end position="319"/>
    </location>
</feature>
<feature type="topological domain" description="Periplasmic" evidence="2">
    <location>
        <begin position="320"/>
        <end position="342"/>
    </location>
</feature>
<feature type="transmembrane region" description="Helical" evidence="2">
    <location>
        <begin position="343"/>
        <end position="363"/>
    </location>
</feature>
<feature type="topological domain" description="Cytoplasmic" evidence="2">
    <location>
        <position position="364"/>
    </location>
</feature>
<feature type="transmembrane region" description="Helical" evidence="2">
    <location>
        <begin position="365"/>
        <end position="384"/>
    </location>
</feature>
<feature type="topological domain" description="Periplasmic" evidence="2">
    <location>
        <begin position="385"/>
        <end position="425"/>
    </location>
</feature>
<feature type="transmembrane region" description="Helical" evidence="2">
    <location>
        <begin position="426"/>
        <end position="446"/>
    </location>
</feature>
<feature type="topological domain" description="Cytoplasmic" evidence="1">
    <location>
        <begin position="447"/>
        <end position="466"/>
    </location>
</feature>
<organism>
    <name type="scientific">Escherichia coli O6:H1 (strain CFT073 / ATCC 700928 / UPEC)</name>
    <dbReference type="NCBI Taxonomy" id="199310"/>
    <lineage>
        <taxon>Bacteria</taxon>
        <taxon>Pseudomonadati</taxon>
        <taxon>Pseudomonadota</taxon>
        <taxon>Gammaproteobacteria</taxon>
        <taxon>Enterobacterales</taxon>
        <taxon>Enterobacteriaceae</taxon>
        <taxon>Escherichia</taxon>
    </lineage>
</organism>
<accession>P67445</accession>
<accession>Q46815</accession>
<comment type="function">
    <text evidence="1">Specific, proton motive force-dependent high-affinity transporter for xanthine.</text>
</comment>
<comment type="catalytic activity">
    <reaction evidence="1">
        <text>xanthine(in) + H(+)(in) = xanthine(out) + H(+)(out)</text>
        <dbReference type="Rhea" id="RHEA:29663"/>
        <dbReference type="ChEBI" id="CHEBI:15378"/>
        <dbReference type="ChEBI" id="CHEBI:17712"/>
    </reaction>
</comment>
<comment type="subcellular location">
    <subcellularLocation>
        <location evidence="1">Cell inner membrane</location>
        <topology evidence="2">Multi-pass membrane protein</topology>
    </subcellularLocation>
</comment>
<comment type="similarity">
    <text evidence="3">Belongs to the nucleobase:cation symporter-2 (NCS2) (TC 2.A.40) family.</text>
</comment>
<comment type="sequence caution" evidence="3">
    <conflict type="erroneous initiation">
        <sequence resource="EMBL-CDS" id="AAN81905"/>
    </conflict>
    <text>Extended N-terminus.</text>
</comment>
<sequence length="466" mass="49108">MSDINHAGSDLIFELEDRPPFHQALVGAITHLLAIFVPMVTPALIVGAALQLSAETTAYLVSMAMIASGIGTWLQVNRYGIVGSGLLSIQSVNFSFVTVMIALGSSMKSDGFHEELIMSSLLGVSFVGAFLVVGSSFILPYLRRVITPTVSGIVVLMIGLSLIKVGIIDFGGGFAAKSSGTFGNYEHLGVGLLVLIVVIGFNCCRSPLLRMGGIAIGLCVGYIASLCLGMVDFSSMRNLPLITIPHPFKYGFSFSFHQFLVVGTIYLLSVLEAVGDITATAMVSRRPIQGEEYQSRLKGGVLADGLVSVIASAVGSLPLTTFAQNNGVIQMTGVASRYVGRTIAVMLVILGLFPMIGGFFTTIPSAVLGGAMTLMFSMIAIAGIRIIITNGLKRRETLIVATSLGLGLGVSYDPEIFKILPASIYVLVENPICAGGLTAILLNIILPGGYRQENVLPGITSAEEMD</sequence>